<keyword id="KW-0997">Cell inner membrane</keyword>
<keyword id="KW-1003">Cell membrane</keyword>
<keyword id="KW-0472">Membrane</keyword>
<keyword id="KW-0812">Transmembrane</keyword>
<keyword id="KW-1133">Transmembrane helix</keyword>
<keyword id="KW-0813">Transport</keyword>
<gene>
    <name evidence="1" type="primary">mdtB</name>
    <name type="ordered locus">SeHA_C2357</name>
</gene>
<protein>
    <recommendedName>
        <fullName evidence="1">Multidrug resistance protein MdtB</fullName>
    </recommendedName>
    <alternativeName>
        <fullName evidence="1">Multidrug transporter MdtB</fullName>
    </alternativeName>
</protein>
<evidence type="ECO:0000255" key="1">
    <source>
        <dbReference type="HAMAP-Rule" id="MF_01423"/>
    </source>
</evidence>
<reference key="1">
    <citation type="journal article" date="2011" name="J. Bacteriol.">
        <title>Comparative genomics of 28 Salmonella enterica isolates: evidence for CRISPR-mediated adaptive sublineage evolution.</title>
        <authorList>
            <person name="Fricke W.F."/>
            <person name="Mammel M.K."/>
            <person name="McDermott P.F."/>
            <person name="Tartera C."/>
            <person name="White D.G."/>
            <person name="Leclerc J.E."/>
            <person name="Ravel J."/>
            <person name="Cebula T.A."/>
        </authorList>
    </citation>
    <scope>NUCLEOTIDE SEQUENCE [LARGE SCALE GENOMIC DNA]</scope>
    <source>
        <strain>SL476</strain>
    </source>
</reference>
<sequence>MQVLPPGSTGGPSRLFILRPVATTLLMAAILLAGIIGYRFLPVAALPEVDYPTIQVVTLYPGASPDVMTSAVTAPLERQFGQMSGLKQMSSQSSGGASVVTLQFQLTLPLDVAEQEVQAAINAATNLLPSDLPNPPIYSKVNPADPPIMTLAVTSNAMPMTQVEDMVETRVAQKISQVSGVGLVTLAGGQRPAVRVKLNAQAVAALGLTSETVRTAITGANVNSAKGSLDGPERAVTLSANDQMQSADEYRRLIIAYQNGAPVRLGDVATVEQGAENSWLGAWANQAPAIVMNVQRQPGANIIATADSIRQMLPQLTESLPKSVKVTVLSDRTTNIRASVRDTQFELMLAIALVVMIIYLFLRNIPATIIPGVAVPLSLIGTFAVMVFLDFSINNLTLMALTIATGFVVDDAIVVIENISRYIEKGEKPLAAALKGAGEIGFTIISLTFSLIAVLIPLLFMGDIVGRLFREFAVTLAVAILISAVVSLTLTPMMCARMLSQQSLRKQNRFSRACERMFDRVIASYGRGLAKVLNHPWLTLSVAFATLLLSVMLWIVIPKGFFPVQDNGIIQGTLQAPQSSSYASMAQRQRQVAERILQDPAVQSLTTFVGVDGANPTLNSARLQINLKPLDARDDRVQQVISRLQTAVATIPGVALYLQPTQDLTIDTQVSRTQYQFTLQATTLDALSHWVPKLQNALQSLPQLSEVSSDWQDRGLAAWVNVDRDSASRLGISMADVDNALYNAFGQRLISTIYTQANQYRVVLEHNTASTPGLAALETIRLTSRDGGTVPLSAIARIEQRFAPLSINHLDQFPVTTFSFNVPEGYSLGDAVQAILDTEKTLALPADITTQFQGSTLAFQAALGSTVWLIVAAVVAMYIVLGVLYESFIHPITILSTLPTAGVGALLALIIAGSELDIIAIIGIILLIGIVKKNAIMMIDFALAAEREQGMSPRDAIFQACLLRFRPILMTTLAALLGALPLMLSTGVGAELRRPLGIAMVGGLLVSQVLTLFTTPVIYLLFDRLSLYVKSRFPRHKEEA</sequence>
<comment type="subunit">
    <text evidence="1">Part of a tripartite efflux system composed of MdtA, MdtB and MdtC. MdtB forms a heteromultimer with MdtC.</text>
</comment>
<comment type="subcellular location">
    <subcellularLocation>
        <location evidence="1">Cell inner membrane</location>
        <topology evidence="1">Multi-pass membrane protein</topology>
    </subcellularLocation>
</comment>
<comment type="similarity">
    <text evidence="1">Belongs to the resistance-nodulation-cell division (RND) (TC 2.A.6) family. MdtB subfamily.</text>
</comment>
<accession>B4T9U1</accession>
<name>MDTB_SALHS</name>
<feature type="chain" id="PRO_1000145661" description="Multidrug resistance protein MdtB">
    <location>
        <begin position="1"/>
        <end position="1040"/>
    </location>
</feature>
<feature type="transmembrane region" description="Helical" evidence="1">
    <location>
        <begin position="25"/>
        <end position="45"/>
    </location>
</feature>
<feature type="transmembrane region" description="Helical" evidence="1">
    <location>
        <begin position="347"/>
        <end position="367"/>
    </location>
</feature>
<feature type="transmembrane region" description="Helical" evidence="1">
    <location>
        <begin position="369"/>
        <end position="389"/>
    </location>
</feature>
<feature type="transmembrane region" description="Helical" evidence="1">
    <location>
        <begin position="396"/>
        <end position="416"/>
    </location>
</feature>
<feature type="transmembrane region" description="Helical" evidence="1">
    <location>
        <begin position="440"/>
        <end position="460"/>
    </location>
</feature>
<feature type="transmembrane region" description="Helical" evidence="1">
    <location>
        <begin position="472"/>
        <end position="492"/>
    </location>
</feature>
<feature type="transmembrane region" description="Helical" evidence="1">
    <location>
        <begin position="537"/>
        <end position="557"/>
    </location>
</feature>
<feature type="transmembrane region" description="Helical" evidence="1">
    <location>
        <begin position="863"/>
        <end position="883"/>
    </location>
</feature>
<feature type="transmembrane region" description="Helical" evidence="1">
    <location>
        <begin position="888"/>
        <end position="908"/>
    </location>
</feature>
<feature type="transmembrane region" description="Helical" evidence="1">
    <location>
        <begin position="910"/>
        <end position="930"/>
    </location>
</feature>
<feature type="transmembrane region" description="Helical" evidence="1">
    <location>
        <begin position="968"/>
        <end position="988"/>
    </location>
</feature>
<feature type="transmembrane region" description="Helical" evidence="1">
    <location>
        <begin position="998"/>
        <end position="1018"/>
    </location>
</feature>
<dbReference type="EMBL" id="CP001120">
    <property type="protein sequence ID" value="ACF65976.1"/>
    <property type="molecule type" value="Genomic_DNA"/>
</dbReference>
<dbReference type="RefSeq" id="WP_001197797.1">
    <property type="nucleotide sequence ID" value="NC_011083.1"/>
</dbReference>
<dbReference type="SMR" id="B4T9U1"/>
<dbReference type="KEGG" id="seh:SeHA_C2357"/>
<dbReference type="HOGENOM" id="CLU_002755_1_1_6"/>
<dbReference type="Proteomes" id="UP000001866">
    <property type="component" value="Chromosome"/>
</dbReference>
<dbReference type="GO" id="GO:0005886">
    <property type="term" value="C:plasma membrane"/>
    <property type="evidence" value="ECO:0007669"/>
    <property type="project" value="UniProtKB-SubCell"/>
</dbReference>
<dbReference type="GO" id="GO:0042910">
    <property type="term" value="F:xenobiotic transmembrane transporter activity"/>
    <property type="evidence" value="ECO:0007669"/>
    <property type="project" value="TreeGrafter"/>
</dbReference>
<dbReference type="FunFam" id="1.20.1640.10:FF:000001">
    <property type="entry name" value="Efflux pump membrane transporter"/>
    <property type="match status" value="1"/>
</dbReference>
<dbReference type="FunFam" id="3.30.70.1430:FF:000001">
    <property type="entry name" value="Efflux pump membrane transporter"/>
    <property type="match status" value="1"/>
</dbReference>
<dbReference type="FunFam" id="3.30.2090.10:FF:000003">
    <property type="entry name" value="Multidrug resistance protein MdtB"/>
    <property type="match status" value="1"/>
</dbReference>
<dbReference type="Gene3D" id="3.30.70.1430">
    <property type="entry name" value="Multidrug efflux transporter AcrB pore domain"/>
    <property type="match status" value="2"/>
</dbReference>
<dbReference type="Gene3D" id="3.30.70.1440">
    <property type="entry name" value="Multidrug efflux transporter AcrB pore domain"/>
    <property type="match status" value="1"/>
</dbReference>
<dbReference type="Gene3D" id="3.30.70.1320">
    <property type="entry name" value="Multidrug efflux transporter AcrB pore domain like"/>
    <property type="match status" value="1"/>
</dbReference>
<dbReference type="Gene3D" id="3.30.2090.10">
    <property type="entry name" value="Multidrug efflux transporter AcrB TolC docking domain, DN and DC subdomains"/>
    <property type="match status" value="2"/>
</dbReference>
<dbReference type="Gene3D" id="1.20.1640.10">
    <property type="entry name" value="Multidrug efflux transporter AcrB transmembrane domain"/>
    <property type="match status" value="2"/>
</dbReference>
<dbReference type="HAMAP" id="MF_01423">
    <property type="entry name" value="MdtB"/>
    <property type="match status" value="1"/>
</dbReference>
<dbReference type="InterPro" id="IPR027463">
    <property type="entry name" value="AcrB_DN_DC_subdom"/>
</dbReference>
<dbReference type="InterPro" id="IPR001036">
    <property type="entry name" value="Acrflvin-R"/>
</dbReference>
<dbReference type="InterPro" id="IPR022831">
    <property type="entry name" value="Multidrug-R_MdtB"/>
</dbReference>
<dbReference type="NCBIfam" id="NF007798">
    <property type="entry name" value="PRK10503.1"/>
    <property type="match status" value="1"/>
</dbReference>
<dbReference type="NCBIfam" id="NF033617">
    <property type="entry name" value="RND_permease_2"/>
    <property type="match status" value="1"/>
</dbReference>
<dbReference type="PANTHER" id="PTHR32063">
    <property type="match status" value="1"/>
</dbReference>
<dbReference type="PANTHER" id="PTHR32063:SF21">
    <property type="entry name" value="MULTIDRUG RESISTANCE PROTEIN MDTB"/>
    <property type="match status" value="1"/>
</dbReference>
<dbReference type="Pfam" id="PF00873">
    <property type="entry name" value="ACR_tran"/>
    <property type="match status" value="1"/>
</dbReference>
<dbReference type="PRINTS" id="PR00702">
    <property type="entry name" value="ACRIFLAVINRP"/>
</dbReference>
<dbReference type="SUPFAM" id="SSF82693">
    <property type="entry name" value="Multidrug efflux transporter AcrB pore domain, PN1, PN2, PC1 and PC2 subdomains"/>
    <property type="match status" value="3"/>
</dbReference>
<dbReference type="SUPFAM" id="SSF82714">
    <property type="entry name" value="Multidrug efflux transporter AcrB TolC docking domain, DN and DC subdomains"/>
    <property type="match status" value="2"/>
</dbReference>
<dbReference type="SUPFAM" id="SSF82866">
    <property type="entry name" value="Multidrug efflux transporter AcrB transmembrane domain"/>
    <property type="match status" value="2"/>
</dbReference>
<organism>
    <name type="scientific">Salmonella heidelberg (strain SL476)</name>
    <dbReference type="NCBI Taxonomy" id="454169"/>
    <lineage>
        <taxon>Bacteria</taxon>
        <taxon>Pseudomonadati</taxon>
        <taxon>Pseudomonadota</taxon>
        <taxon>Gammaproteobacteria</taxon>
        <taxon>Enterobacterales</taxon>
        <taxon>Enterobacteriaceae</taxon>
        <taxon>Salmonella</taxon>
    </lineage>
</organism>
<proteinExistence type="inferred from homology"/>